<protein>
    <recommendedName>
        <fullName>Growth factor receptor-bound protein 2-A</fullName>
    </recommendedName>
    <alternativeName>
        <fullName>Adapter protein GRB2-A</fullName>
    </alternativeName>
    <alternativeName>
        <fullName>SH2/SH3 adapter GRB2-A</fullName>
    </alternativeName>
</protein>
<comment type="function">
    <text evidence="1 4">Adapter protein that provides a critical link between cell surface growth factor receptors and the Ras signaling pathway (By similarity). Promotes meiotic reinitiation during oocyte maturation.</text>
</comment>
<comment type="subcellular location">
    <subcellularLocation>
        <location evidence="1">Nucleus</location>
    </subcellularLocation>
    <subcellularLocation>
        <location evidence="1">Cytoplasm</location>
    </subcellularLocation>
    <subcellularLocation>
        <location evidence="1">Endosome</location>
    </subcellularLocation>
    <subcellularLocation>
        <location evidence="1">Golgi apparatus</location>
    </subcellularLocation>
</comment>
<comment type="alternative products">
    <event type="alternative splicing"/>
    <isoform>
        <id>P87379-1</id>
        <name>1</name>
        <sequence type="displayed"/>
    </isoform>
    <isoform>
        <id>P87379-2</id>
        <name>2</name>
        <sequence type="described" ref="VSP_017084"/>
    </isoform>
</comment>
<comment type="domain">
    <text evidence="4">The two SH3 domains and the SH2 domain are necessary for the reinitiation of oocyte meiosis.</text>
</comment>
<comment type="miscellaneous">
    <molecule>Isoform 1</molecule>
    <text>May be due to partial intron retention.</text>
</comment>
<comment type="similarity">
    <text evidence="7">Belongs to the GRB2/sem-5/DRK family.</text>
</comment>
<organism>
    <name type="scientific">Xenopus laevis</name>
    <name type="common">African clawed frog</name>
    <dbReference type="NCBI Taxonomy" id="8355"/>
    <lineage>
        <taxon>Eukaryota</taxon>
        <taxon>Metazoa</taxon>
        <taxon>Chordata</taxon>
        <taxon>Craniata</taxon>
        <taxon>Vertebrata</taxon>
        <taxon>Euteleostomi</taxon>
        <taxon>Amphibia</taxon>
        <taxon>Batrachia</taxon>
        <taxon>Anura</taxon>
        <taxon>Pipoidea</taxon>
        <taxon>Pipidae</taxon>
        <taxon>Xenopodinae</taxon>
        <taxon>Xenopus</taxon>
        <taxon>Xenopus</taxon>
    </lineage>
</organism>
<sequence length="229" mass="26383">MEAIAKYDFKATADDELSFKRGDVLKVLNEECDQNWYKAELNGKDGFIPKNYIEMKAHPWFFGKIPRAKAEEMLGKQRHDGAFLIRESESAPGDFSLSVKFGNDVQHFKVLRDGAGKYFLWVVKFNSLNELVDYHRSTSVSRNQQIFLRDIEQVPQVHGGDRATSLPQQPTYVQALFDFDPQEDGELGFRRGDFIQVVDNSDPNWWKGTCLSQTGMFPRNYVTPVNRNM</sequence>
<proteinExistence type="evidence at protein level"/>
<feature type="chain" id="PRO_0000088203" description="Growth factor receptor-bound protein 2-A">
    <location>
        <begin position="1"/>
        <end position="229"/>
    </location>
</feature>
<feature type="domain" description="SH3 1" evidence="3">
    <location>
        <begin position="1"/>
        <end position="58"/>
    </location>
</feature>
<feature type="domain" description="SH2" evidence="2">
    <location>
        <begin position="60"/>
        <end position="152"/>
    </location>
</feature>
<feature type="domain" description="SH3 2" evidence="3">
    <location>
        <begin position="168"/>
        <end position="227"/>
    </location>
</feature>
<feature type="splice variant" id="VSP_017084" description="In isoform 2." evidence="5 6">
    <location>
        <begin position="155"/>
        <end position="166"/>
    </location>
</feature>
<feature type="mutagenesis site" description="Unable to reinitiate oocyte meiosis." evidence="4">
    <original>P</original>
    <variation>L</variation>
    <location>
        <position position="49"/>
    </location>
</feature>
<feature type="mutagenesis site" description="Unable to reinitiate oocyte meiosis." evidence="4">
    <original>G</original>
    <variation>R</variation>
    <location>
        <position position="215"/>
    </location>
</feature>
<feature type="sequence conflict" description="In Ref. 2; CAB59279." evidence="7" ref="2">
    <original>V</original>
    <variation>A</variation>
    <location>
        <position position="27"/>
    </location>
</feature>
<feature type="sequence conflict" description="In Ref. 1; AAB49699." evidence="7" ref="1">
    <original>R</original>
    <variation>P</variation>
    <location>
        <position position="112"/>
    </location>
</feature>
<gene>
    <name type="primary">grb2-a</name>
</gene>
<name>GRB2A_XENLA</name>
<accession>P87379</accession>
<accession>Q6GME6</accession>
<accession>Q9PU11</accession>
<evidence type="ECO:0000250" key="1"/>
<evidence type="ECO:0000255" key="2">
    <source>
        <dbReference type="PROSITE-ProRule" id="PRU00191"/>
    </source>
</evidence>
<evidence type="ECO:0000255" key="3">
    <source>
        <dbReference type="PROSITE-ProRule" id="PRU00192"/>
    </source>
</evidence>
<evidence type="ECO:0000269" key="4">
    <source>
    </source>
</evidence>
<evidence type="ECO:0000303" key="5">
    <source ref="1"/>
</evidence>
<evidence type="ECO:0000303" key="6">
    <source ref="2"/>
</evidence>
<evidence type="ECO:0000305" key="7"/>
<reference key="1">
    <citation type="submission" date="1997-02" db="EMBL/GenBank/DDBJ databases">
        <authorList>
            <person name="Lu W."/>
            <person name="Mayer B.J."/>
        </authorList>
    </citation>
    <scope>NUCLEOTIDE SEQUENCE [MRNA] (ISOFORM 2)</scope>
</reference>
<reference key="2">
    <citation type="submission" date="1997-12" db="EMBL/GenBank/DDBJ databases">
        <title>Selective inhibition of neural induction but not mesoderm induction by interfering mutants of Sem-5/Grb2.</title>
        <authorList>
            <person name="Goisset C."/>
            <person name="Shi D.L."/>
            <person name="Boucaut J.-C."/>
        </authorList>
    </citation>
    <scope>NUCLEOTIDE SEQUENCE [MRNA] (ISOFORM 2)</scope>
    <source>
        <tissue>Embryo</tissue>
    </source>
</reference>
<reference key="3">
    <citation type="submission" date="2004-06" db="EMBL/GenBank/DDBJ databases">
        <authorList>
            <consortium name="NIH - Xenopus Gene Collection (XGC) project"/>
        </authorList>
    </citation>
    <scope>NUCLEOTIDE SEQUENCE [LARGE SCALE MRNA] (ISOFORM 1)</scope>
    <source>
        <tissue>Kidney</tissue>
    </source>
</reference>
<reference key="4">
    <citation type="journal article" date="2001" name="Cell. Signal.">
        <title>Grb2 promotes reinitiation of meiosis in Xenopus oocytes.</title>
        <authorList>
            <person name="Cailliau K."/>
            <person name="Browaeys-Poly E."/>
            <person name="Broutin-L'Hermite I."/>
            <person name="Nioche P."/>
            <person name="Garbay C."/>
            <person name="Ducruix A."/>
            <person name="Vilain J.P."/>
        </authorList>
    </citation>
    <scope>FUNCTION</scope>
    <scope>DOMAIN</scope>
    <scope>MUTAGENESIS OF PRO-49 AND GLY-215</scope>
</reference>
<dbReference type="EMBL" id="U89775">
    <property type="protein sequence ID" value="AAB49699.1"/>
    <property type="molecule type" value="mRNA"/>
</dbReference>
<dbReference type="EMBL" id="AJ223061">
    <property type="protein sequence ID" value="CAB59279.1"/>
    <property type="molecule type" value="mRNA"/>
</dbReference>
<dbReference type="EMBL" id="BC074118">
    <property type="protein sequence ID" value="AAH74118.1"/>
    <property type="molecule type" value="mRNA"/>
</dbReference>
<dbReference type="RefSeq" id="NP_001084357.1">
    <property type="nucleotide sequence ID" value="NM_001090888.1"/>
</dbReference>
<dbReference type="RefSeq" id="XP_018089703.1">
    <molecule id="P87379-1"/>
    <property type="nucleotide sequence ID" value="XM_018234214.1"/>
</dbReference>
<dbReference type="RefSeq" id="XP_018089704.1">
    <molecule id="P87379-1"/>
    <property type="nucleotide sequence ID" value="XM_018234215.1"/>
</dbReference>
<dbReference type="BMRB" id="P87379"/>
<dbReference type="SMR" id="P87379"/>
<dbReference type="IntAct" id="P87379">
    <property type="interactions" value="2"/>
</dbReference>
<dbReference type="MINT" id="P87379"/>
<dbReference type="GeneID" id="399458"/>
<dbReference type="KEGG" id="xla:399458"/>
<dbReference type="AGR" id="Xenbase:XB-GENE-6253891"/>
<dbReference type="CTD" id="399458"/>
<dbReference type="Xenbase" id="XB-GENE-6253891">
    <property type="gene designation" value="grb2.L"/>
</dbReference>
<dbReference type="OMA" id="XQPTYVQ"/>
<dbReference type="OrthoDB" id="10255964at2759"/>
<dbReference type="Proteomes" id="UP000186698">
    <property type="component" value="Chromosome 9_10L"/>
</dbReference>
<dbReference type="Bgee" id="399458">
    <property type="expression patterns" value="Expressed in spleen and 19 other cell types or tissues"/>
</dbReference>
<dbReference type="GO" id="GO:0008180">
    <property type="term" value="C:COP9 signalosome"/>
    <property type="evidence" value="ECO:0000318"/>
    <property type="project" value="GO_Central"/>
</dbReference>
<dbReference type="GO" id="GO:0005737">
    <property type="term" value="C:cytoplasm"/>
    <property type="evidence" value="ECO:0000250"/>
    <property type="project" value="UniProtKB"/>
</dbReference>
<dbReference type="GO" id="GO:0005768">
    <property type="term" value="C:endosome"/>
    <property type="evidence" value="ECO:0000250"/>
    <property type="project" value="UniProtKB"/>
</dbReference>
<dbReference type="GO" id="GO:0005794">
    <property type="term" value="C:Golgi apparatus"/>
    <property type="evidence" value="ECO:0007669"/>
    <property type="project" value="UniProtKB-SubCell"/>
</dbReference>
<dbReference type="GO" id="GO:0005654">
    <property type="term" value="C:nucleoplasm"/>
    <property type="evidence" value="ECO:0000318"/>
    <property type="project" value="GO_Central"/>
</dbReference>
<dbReference type="GO" id="GO:0005634">
    <property type="term" value="C:nucleus"/>
    <property type="evidence" value="ECO:0000250"/>
    <property type="project" value="UniProtKB"/>
</dbReference>
<dbReference type="GO" id="GO:0005886">
    <property type="term" value="C:plasma membrane"/>
    <property type="evidence" value="ECO:0000318"/>
    <property type="project" value="GO_Central"/>
</dbReference>
<dbReference type="GO" id="GO:0005154">
    <property type="term" value="F:epidermal growth factor receptor binding"/>
    <property type="evidence" value="ECO:0000250"/>
    <property type="project" value="UniProtKB"/>
</dbReference>
<dbReference type="GO" id="GO:0043560">
    <property type="term" value="F:insulin receptor substrate binding"/>
    <property type="evidence" value="ECO:0000250"/>
    <property type="project" value="UniProtKB"/>
</dbReference>
<dbReference type="GO" id="GO:0001784">
    <property type="term" value="F:phosphotyrosine residue binding"/>
    <property type="evidence" value="ECO:0000318"/>
    <property type="project" value="GO_Central"/>
</dbReference>
<dbReference type="GO" id="GO:0007143">
    <property type="term" value="P:female meiotic nuclear division"/>
    <property type="evidence" value="ECO:0000314"/>
    <property type="project" value="UniProtKB"/>
</dbReference>
<dbReference type="GO" id="GO:0008286">
    <property type="term" value="P:insulin receptor signaling pathway"/>
    <property type="evidence" value="ECO:0000250"/>
    <property type="project" value="UniProtKB"/>
</dbReference>
<dbReference type="GO" id="GO:0043408">
    <property type="term" value="P:regulation of MAPK cascade"/>
    <property type="evidence" value="ECO:0000318"/>
    <property type="project" value="GO_Central"/>
</dbReference>
<dbReference type="GO" id="GO:0007165">
    <property type="term" value="P:signal transduction"/>
    <property type="evidence" value="ECO:0000318"/>
    <property type="project" value="GO_Central"/>
</dbReference>
<dbReference type="CDD" id="cd09941">
    <property type="entry name" value="SH2_Grb2_like"/>
    <property type="match status" value="1"/>
</dbReference>
<dbReference type="CDD" id="cd11949">
    <property type="entry name" value="SH3_GRB2_C"/>
    <property type="match status" value="1"/>
</dbReference>
<dbReference type="CDD" id="cd11946">
    <property type="entry name" value="SH3_GRB2_N"/>
    <property type="match status" value="1"/>
</dbReference>
<dbReference type="FunFam" id="2.30.30.40:FF:000067">
    <property type="entry name" value="Growth factor receptor-bound protein 2"/>
    <property type="match status" value="1"/>
</dbReference>
<dbReference type="FunFam" id="2.30.30.40:FF:000076">
    <property type="entry name" value="Growth factor receptor-bound protein 2"/>
    <property type="match status" value="1"/>
</dbReference>
<dbReference type="FunFam" id="3.30.505.10:FF:000022">
    <property type="entry name" value="Growth factor receptor-bound protein 2"/>
    <property type="match status" value="1"/>
</dbReference>
<dbReference type="Gene3D" id="3.30.505.10">
    <property type="entry name" value="SH2 domain"/>
    <property type="match status" value="1"/>
</dbReference>
<dbReference type="Gene3D" id="2.30.30.40">
    <property type="entry name" value="SH3 Domains"/>
    <property type="match status" value="2"/>
</dbReference>
<dbReference type="InterPro" id="IPR043539">
    <property type="entry name" value="Grb2-like"/>
</dbReference>
<dbReference type="InterPro" id="IPR035643">
    <property type="entry name" value="GRB2_C_SH3"/>
</dbReference>
<dbReference type="InterPro" id="IPR035641">
    <property type="entry name" value="GRB2_N_SH3"/>
</dbReference>
<dbReference type="InterPro" id="IPR000980">
    <property type="entry name" value="SH2"/>
</dbReference>
<dbReference type="InterPro" id="IPR036860">
    <property type="entry name" value="SH2_dom_sf"/>
</dbReference>
<dbReference type="InterPro" id="IPR036028">
    <property type="entry name" value="SH3-like_dom_sf"/>
</dbReference>
<dbReference type="InterPro" id="IPR001452">
    <property type="entry name" value="SH3_domain"/>
</dbReference>
<dbReference type="PANTHER" id="PTHR46037">
    <property type="entry name" value="PROTEIN ENHANCER OF SEVENLESS 2B"/>
    <property type="match status" value="1"/>
</dbReference>
<dbReference type="Pfam" id="PF00017">
    <property type="entry name" value="SH2"/>
    <property type="match status" value="1"/>
</dbReference>
<dbReference type="Pfam" id="PF00018">
    <property type="entry name" value="SH3_1"/>
    <property type="match status" value="2"/>
</dbReference>
<dbReference type="PRINTS" id="PR00499">
    <property type="entry name" value="P67PHOX"/>
</dbReference>
<dbReference type="PRINTS" id="PR00401">
    <property type="entry name" value="SH2DOMAIN"/>
</dbReference>
<dbReference type="PRINTS" id="PR00452">
    <property type="entry name" value="SH3DOMAIN"/>
</dbReference>
<dbReference type="SMART" id="SM00252">
    <property type="entry name" value="SH2"/>
    <property type="match status" value="1"/>
</dbReference>
<dbReference type="SMART" id="SM00326">
    <property type="entry name" value="SH3"/>
    <property type="match status" value="2"/>
</dbReference>
<dbReference type="SUPFAM" id="SSF55550">
    <property type="entry name" value="SH2 domain"/>
    <property type="match status" value="1"/>
</dbReference>
<dbReference type="SUPFAM" id="SSF50044">
    <property type="entry name" value="SH3-domain"/>
    <property type="match status" value="2"/>
</dbReference>
<dbReference type="PROSITE" id="PS50001">
    <property type="entry name" value="SH2"/>
    <property type="match status" value="1"/>
</dbReference>
<dbReference type="PROSITE" id="PS50002">
    <property type="entry name" value="SH3"/>
    <property type="match status" value="2"/>
</dbReference>
<keyword id="KW-0025">Alternative splicing</keyword>
<keyword id="KW-0963">Cytoplasm</keyword>
<keyword id="KW-0217">Developmental protein</keyword>
<keyword id="KW-0967">Endosome</keyword>
<keyword id="KW-0333">Golgi apparatus</keyword>
<keyword id="KW-0469">Meiosis</keyword>
<keyword id="KW-0539">Nucleus</keyword>
<keyword id="KW-1185">Reference proteome</keyword>
<keyword id="KW-0677">Repeat</keyword>
<keyword id="KW-0727">SH2 domain</keyword>
<keyword id="KW-0728">SH3 domain</keyword>